<dbReference type="EMBL" id="AP000560">
    <property type="status" value="NOT_ANNOTATED_CDS"/>
    <property type="molecule type" value="Genomic_DNA"/>
</dbReference>
<dbReference type="EMBL" id="AP001992">
    <property type="status" value="NOT_ANNOTATED_CDS"/>
    <property type="molecule type" value="Genomic_DNA"/>
</dbReference>
<dbReference type="EMBL" id="BC037294">
    <property type="status" value="NOT_ANNOTATED_CDS"/>
    <property type="molecule type" value="mRNA"/>
</dbReference>
<dbReference type="EMBL" id="BC064584">
    <property type="protein sequence ID" value="AAH64584.1"/>
    <property type="molecule type" value="mRNA"/>
</dbReference>
<dbReference type="EMBL" id="AY163836">
    <property type="protein sequence ID" value="AAO23657.1"/>
    <property type="status" value="ALT_FRAME"/>
    <property type="molecule type" value="mRNA"/>
</dbReference>
<dbReference type="EMBL" id="AF439934">
    <property type="protein sequence ID" value="AAP97315.1"/>
    <property type="status" value="ALT_FRAME"/>
    <property type="molecule type" value="mRNA"/>
</dbReference>
<dbReference type="EMBL" id="BK000541">
    <property type="protein sequence ID" value="DAA00367.1"/>
    <property type="molecule type" value="mRNA"/>
</dbReference>
<dbReference type="CCDS" id="CCDS44680.1">
    <molecule id="Q6P2D8-1"/>
</dbReference>
<dbReference type="CCDS" id="CCDS58159.1">
    <molecule id="Q6P2D8-5"/>
</dbReference>
<dbReference type="CCDS" id="CCDS58160.1">
    <molecule id="Q6P2D8-2"/>
</dbReference>
<dbReference type="RefSeq" id="NP_001257309.1">
    <molecule id="Q6P2D8-2"/>
    <property type="nucleotide sequence ID" value="NM_001270380.3"/>
</dbReference>
<dbReference type="RefSeq" id="NP_001257310.1">
    <molecule id="Q6P2D8-5"/>
    <property type="nucleotide sequence ID" value="NM_001270381.3"/>
</dbReference>
<dbReference type="RefSeq" id="NP_892014.1">
    <molecule id="Q6P2D8-1"/>
    <property type="nucleotide sequence ID" value="NM_182969.4"/>
</dbReference>
<dbReference type="RefSeq" id="XP_016872722.1">
    <property type="nucleotide sequence ID" value="XM_017017233.1"/>
</dbReference>
<dbReference type="RefSeq" id="XP_016872723.1">
    <property type="nucleotide sequence ID" value="XM_017017234.1"/>
</dbReference>
<dbReference type="RefSeq" id="XP_047282350.1">
    <molecule id="Q6P2D8-5"/>
    <property type="nucleotide sequence ID" value="XM_047426394.1"/>
</dbReference>
<dbReference type="RefSeq" id="XP_047282353.1">
    <molecule id="Q6P2D8-5"/>
    <property type="nucleotide sequence ID" value="XM_047426397.1"/>
</dbReference>
<dbReference type="SMR" id="Q6P2D8"/>
<dbReference type="BioGRID" id="126811">
    <property type="interactions" value="12"/>
</dbReference>
<dbReference type="FunCoup" id="Q6P2D8">
    <property type="interactions" value="2173"/>
</dbReference>
<dbReference type="IntAct" id="Q6P2D8">
    <property type="interactions" value="6"/>
</dbReference>
<dbReference type="STRING" id="9606.ENSP00000339918"/>
<dbReference type="GlyGen" id="Q6P2D8">
    <property type="glycosylation" value="1 site, 1 O-linked glycan (1 site)"/>
</dbReference>
<dbReference type="iPTMnet" id="Q6P2D8"/>
<dbReference type="PhosphoSitePlus" id="Q6P2D8"/>
<dbReference type="BioMuta" id="XRRA1"/>
<dbReference type="DMDM" id="166919153"/>
<dbReference type="MassIVE" id="Q6P2D8"/>
<dbReference type="PaxDb" id="9606-ENSP00000339918"/>
<dbReference type="PeptideAtlas" id="Q6P2D8"/>
<dbReference type="ProteomicsDB" id="66891">
    <molecule id="Q6P2D8-1"/>
</dbReference>
<dbReference type="ProteomicsDB" id="66892">
    <molecule id="Q6P2D8-2"/>
</dbReference>
<dbReference type="ProteomicsDB" id="66893">
    <molecule id="Q6P2D8-3"/>
</dbReference>
<dbReference type="ProteomicsDB" id="66894">
    <molecule id="Q6P2D8-4"/>
</dbReference>
<dbReference type="Antibodypedia" id="45035">
    <property type="antibodies" value="50 antibodies from 14 providers"/>
</dbReference>
<dbReference type="DNASU" id="143570"/>
<dbReference type="Ensembl" id="ENST00000321448.12">
    <molecule id="Q6P2D8-5"/>
    <property type="protein sequence ID" value="ENSP00000319303.8"/>
    <property type="gene ID" value="ENSG00000166435.17"/>
</dbReference>
<dbReference type="Ensembl" id="ENST00000340360.10">
    <molecule id="Q6P2D8-1"/>
    <property type="protein sequence ID" value="ENSP00000339918.6"/>
    <property type="gene ID" value="ENSG00000166435.17"/>
</dbReference>
<dbReference type="Ensembl" id="ENST00000527087.5">
    <molecule id="Q6P2D8-2"/>
    <property type="protein sequence ID" value="ENSP00000435838.1"/>
    <property type="gene ID" value="ENSG00000166435.17"/>
</dbReference>
<dbReference type="GeneID" id="143570"/>
<dbReference type="KEGG" id="hsa:143570"/>
<dbReference type="UCSC" id="uc001ovp.5">
    <molecule id="Q6P2D8-1"/>
    <property type="organism name" value="human"/>
</dbReference>
<dbReference type="AGR" id="HGNC:18868"/>
<dbReference type="CTD" id="143570"/>
<dbReference type="DisGeNET" id="143570"/>
<dbReference type="GeneCards" id="XRRA1"/>
<dbReference type="HGNC" id="HGNC:18868">
    <property type="gene designation" value="XRRA1"/>
</dbReference>
<dbReference type="HPA" id="ENSG00000166435">
    <property type="expression patterns" value="Low tissue specificity"/>
</dbReference>
<dbReference type="MIM" id="609788">
    <property type="type" value="gene"/>
</dbReference>
<dbReference type="neXtProt" id="NX_Q6P2D8"/>
<dbReference type="OpenTargets" id="ENSG00000166435"/>
<dbReference type="PharmGKB" id="PA134988069"/>
<dbReference type="VEuPathDB" id="HostDB:ENSG00000166435"/>
<dbReference type="eggNOG" id="KOG0619">
    <property type="taxonomic scope" value="Eukaryota"/>
</dbReference>
<dbReference type="GeneTree" id="ENSGT00390000016048"/>
<dbReference type="HOGENOM" id="CLU_015169_0_0_1"/>
<dbReference type="InParanoid" id="Q6P2D8"/>
<dbReference type="OMA" id="FCQEPTS"/>
<dbReference type="OrthoDB" id="1687175at2759"/>
<dbReference type="PAN-GO" id="Q6P2D8">
    <property type="GO annotations" value="1 GO annotation based on evolutionary models"/>
</dbReference>
<dbReference type="PhylomeDB" id="Q6P2D8"/>
<dbReference type="TreeFam" id="TF329758"/>
<dbReference type="PathwayCommons" id="Q6P2D8"/>
<dbReference type="SignaLink" id="Q6P2D8"/>
<dbReference type="BioGRID-ORCS" id="143570">
    <property type="hits" value="15 hits in 1158 CRISPR screens"/>
</dbReference>
<dbReference type="ChiTaRS" id="XRRA1">
    <property type="organism name" value="human"/>
</dbReference>
<dbReference type="GenomeRNAi" id="143570"/>
<dbReference type="Pharos" id="Q6P2D8">
    <property type="development level" value="Tdark"/>
</dbReference>
<dbReference type="PRO" id="PR:Q6P2D8"/>
<dbReference type="Proteomes" id="UP000005640">
    <property type="component" value="Chromosome 11"/>
</dbReference>
<dbReference type="RNAct" id="Q6P2D8">
    <property type="molecule type" value="protein"/>
</dbReference>
<dbReference type="Bgee" id="ENSG00000166435">
    <property type="expression patterns" value="Expressed in sural nerve and 108 other cell types or tissues"/>
</dbReference>
<dbReference type="ExpressionAtlas" id="Q6P2D8">
    <property type="expression patterns" value="baseline and differential"/>
</dbReference>
<dbReference type="GO" id="GO:0005737">
    <property type="term" value="C:cytoplasm"/>
    <property type="evidence" value="ECO:0000314"/>
    <property type="project" value="UniProtKB"/>
</dbReference>
<dbReference type="GO" id="GO:0016604">
    <property type="term" value="C:nuclear body"/>
    <property type="evidence" value="ECO:0000314"/>
    <property type="project" value="HPA"/>
</dbReference>
<dbReference type="GO" id="GO:0005654">
    <property type="term" value="C:nucleoplasm"/>
    <property type="evidence" value="ECO:0000314"/>
    <property type="project" value="HPA"/>
</dbReference>
<dbReference type="GO" id="GO:0005634">
    <property type="term" value="C:nucleus"/>
    <property type="evidence" value="ECO:0000314"/>
    <property type="project" value="UniProtKB"/>
</dbReference>
<dbReference type="GO" id="GO:0010165">
    <property type="term" value="P:response to X-ray"/>
    <property type="evidence" value="ECO:0000314"/>
    <property type="project" value="UniProtKB"/>
</dbReference>
<dbReference type="FunFam" id="3.80.10.10:FF:000372">
    <property type="entry name" value="X-ray radiation resistance associated 1"/>
    <property type="match status" value="1"/>
</dbReference>
<dbReference type="Gene3D" id="3.80.10.10">
    <property type="entry name" value="Ribonuclease Inhibitor"/>
    <property type="match status" value="1"/>
</dbReference>
<dbReference type="InterPro" id="IPR001611">
    <property type="entry name" value="Leu-rich_rpt"/>
</dbReference>
<dbReference type="InterPro" id="IPR003591">
    <property type="entry name" value="Leu-rich_rpt_typical-subtyp"/>
</dbReference>
<dbReference type="InterPro" id="IPR032675">
    <property type="entry name" value="LRR_dom_sf"/>
</dbReference>
<dbReference type="PANTHER" id="PTHR22710">
    <property type="entry name" value="X-RAY RADIATION RESISTANCE ASSOCIATED PROTEIN 1 XRRA1"/>
    <property type="match status" value="1"/>
</dbReference>
<dbReference type="PANTHER" id="PTHR22710:SF2">
    <property type="entry name" value="X-RAY RADIATION RESISTANCE-ASSOCIATED PROTEIN 1"/>
    <property type="match status" value="1"/>
</dbReference>
<dbReference type="SMART" id="SM00369">
    <property type="entry name" value="LRR_TYP"/>
    <property type="match status" value="4"/>
</dbReference>
<dbReference type="SUPFAM" id="SSF52058">
    <property type="entry name" value="L domain-like"/>
    <property type="match status" value="1"/>
</dbReference>
<dbReference type="PROSITE" id="PS51450">
    <property type="entry name" value="LRR"/>
    <property type="match status" value="6"/>
</dbReference>
<proteinExistence type="evidence at protein level"/>
<accession>Q6P2D8</accession>
<accession>B5MD90</accession>
<accession>J3KNJ1</accession>
<accession>Q7RTT7</accession>
<accession>Q7Z463</accession>
<accession>Q7Z4U0</accession>
<name>XRRA1_HUMAN</name>
<feature type="chain" id="PRO_0000318130" description="X-ray radiation resistance-associated protein 1">
    <location>
        <begin position="1"/>
        <end position="792"/>
    </location>
</feature>
<feature type="repeat" description="LRR 1">
    <location>
        <begin position="104"/>
        <end position="125"/>
    </location>
</feature>
<feature type="repeat" description="LRR 2">
    <location>
        <begin position="141"/>
        <end position="155"/>
    </location>
</feature>
<feature type="repeat" description="LRR 3">
    <location>
        <begin position="164"/>
        <end position="184"/>
    </location>
</feature>
<feature type="repeat" description="LRR 4">
    <location>
        <begin position="188"/>
        <end position="209"/>
    </location>
</feature>
<feature type="repeat" description="LRR 5">
    <location>
        <begin position="229"/>
        <end position="250"/>
    </location>
</feature>
<feature type="repeat" description="LRR 6">
    <location>
        <begin position="254"/>
        <end position="275"/>
    </location>
</feature>
<feature type="region of interest" description="Disordered" evidence="2">
    <location>
        <begin position="490"/>
        <end position="517"/>
    </location>
</feature>
<feature type="region of interest" description="Disordered" evidence="2">
    <location>
        <begin position="537"/>
        <end position="562"/>
    </location>
</feature>
<feature type="region of interest" description="Disordered" evidence="2">
    <location>
        <begin position="577"/>
        <end position="601"/>
    </location>
</feature>
<feature type="coiled-coil region" evidence="1">
    <location>
        <begin position="723"/>
        <end position="745"/>
    </location>
</feature>
<feature type="compositionally biased region" description="Basic and acidic residues" evidence="2">
    <location>
        <begin position="549"/>
        <end position="560"/>
    </location>
</feature>
<feature type="splice variant" id="VSP_044988" description="In isoform 5." evidence="6">
    <location>
        <begin position="1"/>
        <end position="233"/>
    </location>
</feature>
<feature type="splice variant" id="VSP_052670" description="In isoform 2." evidence="6">
    <location>
        <begin position="327"/>
        <end position="413"/>
    </location>
</feature>
<feature type="splice variant" id="VSP_052671" description="In isoform 4." evidence="7">
    <location>
        <begin position="327"/>
        <end position="382"/>
    </location>
</feature>
<feature type="splice variant" id="VSP_052672" description="In isoform 3." evidence="5">
    <location>
        <begin position="327"/>
        <end position="340"/>
    </location>
</feature>
<feature type="splice variant" id="VSP_044989" description="In isoform 5." evidence="6">
    <location>
        <begin position="341"/>
        <end position="382"/>
    </location>
</feature>
<feature type="splice variant" id="VSP_052673" description="In isoform 2." evidence="6">
    <original>AQRIPIPPPKKT</original>
    <variation>VLSCTSGQNGGW</variation>
    <location>
        <begin position="674"/>
        <end position="685"/>
    </location>
</feature>
<feature type="splice variant" id="VSP_052674" description="In isoform 2." evidence="6">
    <location>
        <begin position="686"/>
        <end position="792"/>
    </location>
</feature>
<feature type="sequence variant" id="VAR_038693" description="In dbSNP:rs4944960." evidence="4">
    <original>T</original>
    <variation>R</variation>
    <location>
        <position position="473"/>
    </location>
</feature>
<feature type="sequence variant" id="VAR_051492" description="In dbSNP:rs12291445.">
    <original>K</original>
    <variation>E</variation>
    <location>
        <position position="480"/>
    </location>
</feature>
<feature type="sequence conflict" description="In Ref. 2; AAH64584." evidence="8" ref="2">
    <original>F</original>
    <variation>L</variation>
    <location>
        <position position="3"/>
    </location>
</feature>
<feature type="sequence conflict" description="In Ref. 3; AAO23657." evidence="8" ref="3">
    <original>V</original>
    <variation>M</variation>
    <location>
        <position position="356"/>
    </location>
</feature>
<feature type="sequence conflict" description="In Ref. 2; BC037294." evidence="8" ref="2">
    <original>M</original>
    <variation>V</variation>
    <location>
        <position position="778"/>
    </location>
</feature>
<evidence type="ECO:0000255" key="1"/>
<evidence type="ECO:0000256" key="2">
    <source>
        <dbReference type="SAM" id="MobiDB-lite"/>
    </source>
</evidence>
<evidence type="ECO:0000269" key="3">
    <source>
    </source>
</evidence>
<evidence type="ECO:0000269" key="4">
    <source>
    </source>
</evidence>
<evidence type="ECO:0000303" key="5">
    <source>
    </source>
</evidence>
<evidence type="ECO:0000303" key="6">
    <source>
    </source>
</evidence>
<evidence type="ECO:0000303" key="7">
    <source ref="4"/>
</evidence>
<evidence type="ECO:0000305" key="8"/>
<evidence type="ECO:0000312" key="9">
    <source>
        <dbReference type="EMBL" id="AAH64584.1"/>
    </source>
</evidence>
<evidence type="ECO:0000312" key="10">
    <source>
        <dbReference type="EMBL" id="AAP97315.1"/>
    </source>
</evidence>
<evidence type="ECO:0000312" key="11">
    <source>
        <dbReference type="EMBL" id="DAA00367.1"/>
    </source>
</evidence>
<sequence length="792" mass="89864">MAFSGIYKLDDGKPYLNNCFPARNLLRVPEEGQGHWLVVQKGNLKKKPKGLVGAQAERRESLKATSFEFKGKKESRRENQVDLPGHILDQAFLLKHHCVRKPSDLCTINAKENDFKHFHSVIYINASENLLPLEAFHTFPALKELDLAFNGIKTIYVKYGDFKLLEFLDLSFNSLTVEAICDLGILPHLRVLLLTGNGLTSLPPNLAVAEQEASVTSLTSKRYILRFPALETLMLDDNRLSNPSCFASLAGLRRLKKLSLDENRIIRIPYLQQVQLYDESVDWNGGRGSPHKEPQFMLQSKPRMLEDSDEQLDYTVLPMKKDVDRTEVVFSSYPGFSTSETTKICSLPPIFEILPVKSLKARNQTLAPPFPELRYLSLAYNKIAKEDAVLPVALFPSLCEFVFHNNPLVAHTRGVPPLLKSFLQERLGIHLIRRKIVKPKHHVLMSRKESWKVKSEIPKVPKQPLVLHHPRMTTTKSPSKDMLEPEAELAEDLPTTKSTSVESEMPTENLEGHSPSCRTFVPLPPICSNSTVHSEETLSHLSDTTVRLSPERPSDEDSKSTESIFLTQVSELPSSVIHKDDLELKEKDQKKPPTAPREVKGTRRKLPTAFLPSKYHGYEELLTAKPDPAFIEPKGIQKNAQALQQMLKHPLLCHSSKPKLDTLQKPYVHKEKRAQRIPIPPPKKTRAQLLDDIFIRLRDPRNITEAPLGAVLHQWTERRLVNHKQYLEAKRLLKEFQARYRQLVSGSLRTVFGTTPLPMACPALSESQPKFGHFLEFMDEFCQEPTASDSQG</sequence>
<comment type="function">
    <text evidence="3">May be involved in the response of cells to X-ray radiation.</text>
</comment>
<comment type="subcellular location">
    <subcellularLocation>
        <location evidence="3">Cytoplasm</location>
    </subcellularLocation>
    <subcellularLocation>
        <location evidence="3">Nucleus</location>
    </subcellularLocation>
</comment>
<comment type="alternative products">
    <event type="alternative splicing"/>
    <isoform>
        <id>Q6P2D8-1</id>
        <name evidence="8">1</name>
        <sequence type="displayed"/>
    </isoform>
    <isoform>
        <id>Q6P2D8-2</id>
        <name evidence="4">2</name>
        <sequence type="described" ref="VSP_052670 VSP_052673 VSP_052674"/>
    </isoform>
    <isoform>
        <id>Q6P2D8-3</id>
        <name evidence="3">3</name>
        <sequence type="described" ref="VSP_052672"/>
    </isoform>
    <isoform>
        <id>Q6P2D8-4</id>
        <name>4</name>
        <sequence type="described" ref="VSP_052671"/>
    </isoform>
    <isoform>
        <id>Q6P2D8-5</id>
        <name>5</name>
        <sequence type="described" ref="VSP_044988 VSP_044989"/>
    </isoform>
</comment>
<comment type="tissue specificity">
    <text evidence="3">Expressed predominantly in testis followed by prostate and ovary. Low levels found in other tissues including peripheral blood leukocytes, spleen, thymus, small intestine and colon. Also expressed in neuroblastoma, glioma, breast, lung, leukemia, renal, ovarian, prostate and colorectal cancer cell lines.</text>
</comment>
<comment type="induction">
    <text evidence="3">By X-ray irradiation immediately after exposure and is then down-regulated two-fold in an X-ray radiation-resistant cell clone. Responds differently to X-ray radiation in clones of varying radiation responses.</text>
</comment>
<comment type="miscellaneous">
    <molecule>Isoform 1</molecule>
    <text evidence="8">Gene model based on mouse cDNA data.</text>
</comment>
<comment type="sequence caution" evidence="8">
    <conflict type="frameshift">
        <sequence resource="EMBL-CDS" id="AAO23657"/>
    </conflict>
</comment>
<comment type="sequence caution" evidence="8">
    <conflict type="frameshift">
        <sequence resource="EMBL-CDS" id="AAP97315"/>
    </conflict>
</comment>
<protein>
    <recommendedName>
        <fullName>X-ray radiation resistance-associated protein 1</fullName>
    </recommendedName>
</protein>
<organism>
    <name type="scientific">Homo sapiens</name>
    <name type="common">Human</name>
    <dbReference type="NCBI Taxonomy" id="9606"/>
    <lineage>
        <taxon>Eukaryota</taxon>
        <taxon>Metazoa</taxon>
        <taxon>Chordata</taxon>
        <taxon>Craniata</taxon>
        <taxon>Vertebrata</taxon>
        <taxon>Euteleostomi</taxon>
        <taxon>Mammalia</taxon>
        <taxon>Eutheria</taxon>
        <taxon>Euarchontoglires</taxon>
        <taxon>Primates</taxon>
        <taxon>Haplorrhini</taxon>
        <taxon>Catarrhini</taxon>
        <taxon>Hominidae</taxon>
        <taxon>Homo</taxon>
    </lineage>
</organism>
<reference evidence="8" key="1">
    <citation type="journal article" date="2006" name="Nature">
        <title>Human chromosome 11 DNA sequence and analysis including novel gene identification.</title>
        <authorList>
            <person name="Taylor T.D."/>
            <person name="Noguchi H."/>
            <person name="Totoki Y."/>
            <person name="Toyoda A."/>
            <person name="Kuroki Y."/>
            <person name="Dewar K."/>
            <person name="Lloyd C."/>
            <person name="Itoh T."/>
            <person name="Takeda T."/>
            <person name="Kim D.-W."/>
            <person name="She X."/>
            <person name="Barlow K.F."/>
            <person name="Bloom T."/>
            <person name="Bruford E."/>
            <person name="Chang J.L."/>
            <person name="Cuomo C.A."/>
            <person name="Eichler E."/>
            <person name="FitzGerald M.G."/>
            <person name="Jaffe D.B."/>
            <person name="LaButti K."/>
            <person name="Nicol R."/>
            <person name="Park H.-S."/>
            <person name="Seaman C."/>
            <person name="Sougnez C."/>
            <person name="Yang X."/>
            <person name="Zimmer A.R."/>
            <person name="Zody M.C."/>
            <person name="Birren B.W."/>
            <person name="Nusbaum C."/>
            <person name="Fujiyama A."/>
            <person name="Hattori M."/>
            <person name="Rogers J."/>
            <person name="Lander E.S."/>
            <person name="Sakaki Y."/>
        </authorList>
    </citation>
    <scope>NUCLEOTIDE SEQUENCE [LARGE SCALE GENOMIC DNA]</scope>
</reference>
<reference evidence="8 9" key="2">
    <citation type="journal article" date="2004" name="Genome Res.">
        <title>The status, quality, and expansion of the NIH full-length cDNA project: the Mammalian Gene Collection (MGC).</title>
        <authorList>
            <consortium name="The MGC Project Team"/>
        </authorList>
    </citation>
    <scope>NUCLEOTIDE SEQUENCE [LARGE SCALE MRNA] (ISOFORMS 2 AND 5)</scope>
    <scope>VARIANT ARG-473</scope>
    <source>
        <tissue evidence="9">Brain</tissue>
        <tissue>Testis</tissue>
    </source>
</reference>
<reference evidence="8 11" key="3">
    <citation type="journal article" date="2003" name="BMC Genomics">
        <title>Molecular cloning, genomic characterization and over-expression of a novel gene, XRRA1, identified from human colorectal cancer cell HCT116Clone2_XRR and macaque testis.</title>
        <authorList>
            <person name="Mesak F.M."/>
            <person name="Osada N."/>
            <person name="Hashimoto K."/>
            <person name="Liu Q.Y."/>
            <person name="Ng C.E."/>
        </authorList>
    </citation>
    <scope>NUCLEOTIDE SEQUENCE [MRNA] OF 229-380 (ISOFORM 3)</scope>
    <scope>IDENTIFICATION (ISOFORM 1)</scope>
    <scope>SUBCELLULAR LOCATION</scope>
    <scope>TISSUE SPECIFICITY</scope>
    <scope>INDUCTION</scope>
    <source>
        <tissue evidence="3">Colon cancer</tissue>
    </source>
</reference>
<reference evidence="8 10" key="4">
    <citation type="submission" date="2001-10" db="EMBL/GenBank/DDBJ databases">
        <authorList>
            <person name="Guo J.H."/>
            <person name="Zan Q."/>
            <person name="Yu L."/>
        </authorList>
    </citation>
    <scope>NUCLEOTIDE SEQUENCE [MRNA] OF 293-792 (ISOFORM 4)</scope>
</reference>
<keyword id="KW-0025">Alternative splicing</keyword>
<keyword id="KW-0175">Coiled coil</keyword>
<keyword id="KW-0963">Cytoplasm</keyword>
<keyword id="KW-0433">Leucine-rich repeat</keyword>
<keyword id="KW-0539">Nucleus</keyword>
<keyword id="KW-1267">Proteomics identification</keyword>
<keyword id="KW-1185">Reference proteome</keyword>
<keyword id="KW-0677">Repeat</keyword>
<gene>
    <name evidence="9" type="primary">XRRA1</name>
</gene>